<name>RL15E_METTH</name>
<comment type="similarity">
    <text evidence="1">Belongs to the eukaryotic ribosomal protein eL15 family.</text>
</comment>
<comment type="sequence caution" evidence="1">
    <conflict type="erroneous termination">
        <sequence resource="EMBL-CDS" id="AAB85195"/>
    </conflict>
    <text>Truncated C-terminus.</text>
</comment>
<organism>
    <name type="scientific">Methanothermobacter thermautotrophicus (strain ATCC 29096 / DSM 1053 / JCM 10044 / NBRC 100330 / Delta H)</name>
    <name type="common">Methanobacterium thermoautotrophicum</name>
    <dbReference type="NCBI Taxonomy" id="187420"/>
    <lineage>
        <taxon>Archaea</taxon>
        <taxon>Methanobacteriati</taxon>
        <taxon>Methanobacteriota</taxon>
        <taxon>Methanomada group</taxon>
        <taxon>Methanobacteria</taxon>
        <taxon>Methanobacteriales</taxon>
        <taxon>Methanobacteriaceae</taxon>
        <taxon>Methanothermobacter</taxon>
    </lineage>
</organism>
<keyword id="KW-1185">Reference proteome</keyword>
<keyword id="KW-0687">Ribonucleoprotein</keyword>
<keyword id="KW-0689">Ribosomal protein</keyword>
<accession>O26786</accession>
<dbReference type="EMBL" id="AE000666">
    <property type="protein sequence ID" value="AAB85195.1"/>
    <property type="status" value="ALT_SEQ"/>
    <property type="molecule type" value="Genomic_DNA"/>
</dbReference>
<dbReference type="PIR" id="A69192">
    <property type="entry name" value="A69192"/>
</dbReference>
<dbReference type="SMR" id="O26786"/>
<dbReference type="FunCoup" id="O26786">
    <property type="interactions" value="159"/>
</dbReference>
<dbReference type="STRING" id="187420.MTH_690"/>
<dbReference type="PaxDb" id="187420-MTH_690"/>
<dbReference type="EnsemblBacteria" id="AAB85195">
    <property type="protein sequence ID" value="AAB85195"/>
    <property type="gene ID" value="MTH_690"/>
</dbReference>
<dbReference type="KEGG" id="mth:MTH_690"/>
<dbReference type="PATRIC" id="fig|187420.15.peg.671"/>
<dbReference type="HOGENOM" id="CLU_080796_1_0_2"/>
<dbReference type="InParanoid" id="O26786"/>
<dbReference type="Proteomes" id="UP000005223">
    <property type="component" value="Chromosome"/>
</dbReference>
<dbReference type="GO" id="GO:0022625">
    <property type="term" value="C:cytosolic large ribosomal subunit"/>
    <property type="evidence" value="ECO:0007669"/>
    <property type="project" value="TreeGrafter"/>
</dbReference>
<dbReference type="GO" id="GO:0003723">
    <property type="term" value="F:RNA binding"/>
    <property type="evidence" value="ECO:0007669"/>
    <property type="project" value="TreeGrafter"/>
</dbReference>
<dbReference type="GO" id="GO:0003735">
    <property type="term" value="F:structural constituent of ribosome"/>
    <property type="evidence" value="ECO:0007669"/>
    <property type="project" value="InterPro"/>
</dbReference>
<dbReference type="GO" id="GO:0002181">
    <property type="term" value="P:cytoplasmic translation"/>
    <property type="evidence" value="ECO:0007669"/>
    <property type="project" value="TreeGrafter"/>
</dbReference>
<dbReference type="FunFam" id="3.40.1120.10:FF:000002">
    <property type="entry name" value="50S ribosomal protein L15e"/>
    <property type="match status" value="1"/>
</dbReference>
<dbReference type="Gene3D" id="3.40.1120.10">
    <property type="entry name" value="Ribosomal protein l15e"/>
    <property type="match status" value="1"/>
</dbReference>
<dbReference type="HAMAP" id="MF_00256">
    <property type="entry name" value="Ribosomal_eL15"/>
    <property type="match status" value="1"/>
</dbReference>
<dbReference type="InterPro" id="IPR024794">
    <property type="entry name" value="Rbsml_eL15_core_dom_sf"/>
</dbReference>
<dbReference type="InterPro" id="IPR000439">
    <property type="entry name" value="Ribosomal_eL15"/>
</dbReference>
<dbReference type="InterPro" id="IPR020926">
    <property type="entry name" value="Ribosomal_eL15_arc"/>
</dbReference>
<dbReference type="InterPro" id="IPR020925">
    <property type="entry name" value="Ribosomal_eL15_CS"/>
</dbReference>
<dbReference type="InterPro" id="IPR012678">
    <property type="entry name" value="Ribosomal_uL23/eL15/eS24_sf"/>
</dbReference>
<dbReference type="NCBIfam" id="NF003269">
    <property type="entry name" value="PRK04243.1"/>
    <property type="match status" value="1"/>
</dbReference>
<dbReference type="PANTHER" id="PTHR11847:SF4">
    <property type="entry name" value="LARGE RIBOSOMAL SUBUNIT PROTEIN EL15"/>
    <property type="match status" value="1"/>
</dbReference>
<dbReference type="PANTHER" id="PTHR11847">
    <property type="entry name" value="RIBOSOMAL PROTEIN L15"/>
    <property type="match status" value="1"/>
</dbReference>
<dbReference type="Pfam" id="PF00827">
    <property type="entry name" value="Ribosomal_L15e"/>
    <property type="match status" value="1"/>
</dbReference>
<dbReference type="SMART" id="SM01384">
    <property type="entry name" value="Ribosomal_L15e"/>
    <property type="match status" value="1"/>
</dbReference>
<dbReference type="SUPFAM" id="SSF54189">
    <property type="entry name" value="Ribosomal proteins S24e, L23 and L15e"/>
    <property type="match status" value="1"/>
</dbReference>
<dbReference type="PROSITE" id="PS01194">
    <property type="entry name" value="RIBOSOMAL_L15E"/>
    <property type="match status" value="1"/>
</dbReference>
<protein>
    <recommendedName>
        <fullName evidence="1">Large ribosomal subunit protein eL15</fullName>
    </recommendedName>
    <alternativeName>
        <fullName>50S ribosomal protein L15e</fullName>
    </alternativeName>
</protein>
<sequence length="182" mass="21919">MMYRYVKDAWKNPKDSYVRELMWERAPKWRRDPVIKRIERPTRIDRARALGYRAKPGYIVVRTRVRRGSQRKTRFKAGRRPTRMGVKKITTAKSIKRIAEERVARKYPNMEVLNSYWVWEDGKYKFYEVILVDPNHLAIKNDPKIYWICVKQHRGRVFRGLISEGKKNRGLRNRGKGAEKVR</sequence>
<proteinExistence type="inferred from homology"/>
<feature type="chain" id="PRO_0000127577" description="Large ribosomal subunit protein eL15">
    <location>
        <begin position="1"/>
        <end position="182"/>
    </location>
</feature>
<gene>
    <name type="primary">rpl15e</name>
    <name type="ordered locus">MTH_690</name>
</gene>
<evidence type="ECO:0000305" key="1"/>
<reference key="1">
    <citation type="journal article" date="1997" name="J. Bacteriol.">
        <title>Complete genome sequence of Methanobacterium thermoautotrophicum deltaH: functional analysis and comparative genomics.</title>
        <authorList>
            <person name="Smith D.R."/>
            <person name="Doucette-Stamm L.A."/>
            <person name="Deloughery C."/>
            <person name="Lee H.-M."/>
            <person name="Dubois J."/>
            <person name="Aldredge T."/>
            <person name="Bashirzadeh R."/>
            <person name="Blakely D."/>
            <person name="Cook R."/>
            <person name="Gilbert K."/>
            <person name="Harrison D."/>
            <person name="Hoang L."/>
            <person name="Keagle P."/>
            <person name="Lumm W."/>
            <person name="Pothier B."/>
            <person name="Qiu D."/>
            <person name="Spadafora R."/>
            <person name="Vicare R."/>
            <person name="Wang Y."/>
            <person name="Wierzbowski J."/>
            <person name="Gibson R."/>
            <person name="Jiwani N."/>
            <person name="Caruso A."/>
            <person name="Bush D."/>
            <person name="Safer H."/>
            <person name="Patwell D."/>
            <person name="Prabhakar S."/>
            <person name="McDougall S."/>
            <person name="Shimer G."/>
            <person name="Goyal A."/>
            <person name="Pietrovski S."/>
            <person name="Church G.M."/>
            <person name="Daniels C.J."/>
            <person name="Mao J.-I."/>
            <person name="Rice P."/>
            <person name="Noelling J."/>
            <person name="Reeve J.N."/>
        </authorList>
    </citation>
    <scope>NUCLEOTIDE SEQUENCE [LARGE SCALE GENOMIC DNA]</scope>
    <source>
        <strain>ATCC 29096 / DSM 1053 / JCM 10044 / NBRC 100330 / Delta H</strain>
    </source>
</reference>